<feature type="chain" id="PRO_0000127896" description="Uncharacterized protein AF_0605">
    <location>
        <begin position="1"/>
        <end position="58"/>
    </location>
</feature>
<sequence>MMSLAKMYDKEYFEGKTYKEGYKFEIFYPFHKTIAEAIFEMFKPRIVLDVRMCYGISC</sequence>
<proteinExistence type="predicted"/>
<protein>
    <recommendedName>
        <fullName>Uncharacterized protein AF_0605</fullName>
    </recommendedName>
</protein>
<reference key="1">
    <citation type="journal article" date="1997" name="Nature">
        <title>The complete genome sequence of the hyperthermophilic, sulphate-reducing archaeon Archaeoglobus fulgidus.</title>
        <authorList>
            <person name="Klenk H.-P."/>
            <person name="Clayton R.A."/>
            <person name="Tomb J.-F."/>
            <person name="White O."/>
            <person name="Nelson K.E."/>
            <person name="Ketchum K.A."/>
            <person name="Dodson R.J."/>
            <person name="Gwinn M.L."/>
            <person name="Hickey E.K."/>
            <person name="Peterson J.D."/>
            <person name="Richardson D.L."/>
            <person name="Kerlavage A.R."/>
            <person name="Graham D.E."/>
            <person name="Kyrpides N.C."/>
            <person name="Fleischmann R.D."/>
            <person name="Quackenbush J."/>
            <person name="Lee N.H."/>
            <person name="Sutton G.G."/>
            <person name="Gill S.R."/>
            <person name="Kirkness E.F."/>
            <person name="Dougherty B.A."/>
            <person name="McKenney K."/>
            <person name="Adams M.D."/>
            <person name="Loftus B.J."/>
            <person name="Peterson S.N."/>
            <person name="Reich C.I."/>
            <person name="McNeil L.K."/>
            <person name="Badger J.H."/>
            <person name="Glodek A."/>
            <person name="Zhou L."/>
            <person name="Overbeek R."/>
            <person name="Gocayne J.D."/>
            <person name="Weidman J.F."/>
            <person name="McDonald L.A."/>
            <person name="Utterback T.R."/>
            <person name="Cotton M.D."/>
            <person name="Spriggs T."/>
            <person name="Artiach P."/>
            <person name="Kaine B.P."/>
            <person name="Sykes S.M."/>
            <person name="Sadow P.W."/>
            <person name="D'Andrea K.P."/>
            <person name="Bowman C."/>
            <person name="Fujii C."/>
            <person name="Garland S.A."/>
            <person name="Mason T.M."/>
            <person name="Olsen G.J."/>
            <person name="Fraser C.M."/>
            <person name="Smith H.O."/>
            <person name="Woese C.R."/>
            <person name="Venter J.C."/>
        </authorList>
    </citation>
    <scope>NUCLEOTIDE SEQUENCE [LARGE SCALE GENOMIC DNA]</scope>
    <source>
        <strain>ATCC 49558 / DSM 4304 / JCM 9628 / NBRC 100126 / VC-16</strain>
    </source>
</reference>
<name>Y605_ARCFU</name>
<gene>
    <name type="ordered locus">AF_0605</name>
</gene>
<accession>O29650</accession>
<organism>
    <name type="scientific">Archaeoglobus fulgidus (strain ATCC 49558 / DSM 4304 / JCM 9628 / NBRC 100126 / VC-16)</name>
    <dbReference type="NCBI Taxonomy" id="224325"/>
    <lineage>
        <taxon>Archaea</taxon>
        <taxon>Methanobacteriati</taxon>
        <taxon>Methanobacteriota</taxon>
        <taxon>Archaeoglobi</taxon>
        <taxon>Archaeoglobales</taxon>
        <taxon>Archaeoglobaceae</taxon>
        <taxon>Archaeoglobus</taxon>
    </lineage>
</organism>
<dbReference type="EMBL" id="AE000782">
    <property type="protein sequence ID" value="AAB90643.1"/>
    <property type="molecule type" value="Genomic_DNA"/>
</dbReference>
<dbReference type="PIR" id="E69325">
    <property type="entry name" value="E69325"/>
</dbReference>
<dbReference type="SMR" id="O29650"/>
<dbReference type="STRING" id="224325.AF_0605"/>
<dbReference type="PaxDb" id="224325-AF_0605"/>
<dbReference type="EnsemblBacteria" id="AAB90643">
    <property type="protein sequence ID" value="AAB90643"/>
    <property type="gene ID" value="AF_0605"/>
</dbReference>
<dbReference type="KEGG" id="afu:AF_0605"/>
<dbReference type="HOGENOM" id="CLU_2985454_0_0_2"/>
<dbReference type="Proteomes" id="UP000002199">
    <property type="component" value="Chromosome"/>
</dbReference>
<keyword id="KW-1185">Reference proteome</keyword>